<proteinExistence type="inferred from homology"/>
<dbReference type="EMBL" id="AE005174">
    <property type="protein sequence ID" value="AAG59053.1"/>
    <property type="status" value="ALT_INIT"/>
    <property type="molecule type" value="Genomic_DNA"/>
</dbReference>
<dbReference type="EMBL" id="BA000007">
    <property type="protein sequence ID" value="BAB38210.1"/>
    <property type="molecule type" value="Genomic_DNA"/>
</dbReference>
<dbReference type="PIR" id="A86074">
    <property type="entry name" value="A86074"/>
</dbReference>
<dbReference type="PIR" id="C91227">
    <property type="entry name" value="C91227"/>
</dbReference>
<dbReference type="SMR" id="Q8X8H0"/>
<dbReference type="STRING" id="155864.Z5400"/>
<dbReference type="KEGG" id="ece:Z5400"/>
<dbReference type="KEGG" id="ecs:ECs_4787"/>
<dbReference type="PATRIC" id="fig|386585.9.peg.4998"/>
<dbReference type="eggNOG" id="COG0218">
    <property type="taxonomic scope" value="Bacteria"/>
</dbReference>
<dbReference type="HOGENOM" id="CLU_033732_1_2_6"/>
<dbReference type="OMA" id="AKVDQCP"/>
<dbReference type="Proteomes" id="UP000000558">
    <property type="component" value="Chromosome"/>
</dbReference>
<dbReference type="Proteomes" id="UP000002519">
    <property type="component" value="Chromosome"/>
</dbReference>
<dbReference type="GO" id="GO:0005829">
    <property type="term" value="C:cytosol"/>
    <property type="evidence" value="ECO:0007669"/>
    <property type="project" value="TreeGrafter"/>
</dbReference>
<dbReference type="GO" id="GO:0005525">
    <property type="term" value="F:GTP binding"/>
    <property type="evidence" value="ECO:0007669"/>
    <property type="project" value="UniProtKB-UniRule"/>
</dbReference>
<dbReference type="GO" id="GO:0046872">
    <property type="term" value="F:metal ion binding"/>
    <property type="evidence" value="ECO:0007669"/>
    <property type="project" value="UniProtKB-KW"/>
</dbReference>
<dbReference type="GO" id="GO:0000917">
    <property type="term" value="P:division septum assembly"/>
    <property type="evidence" value="ECO:0007669"/>
    <property type="project" value="UniProtKB-KW"/>
</dbReference>
<dbReference type="CDD" id="cd01876">
    <property type="entry name" value="YihA_EngB"/>
    <property type="match status" value="1"/>
</dbReference>
<dbReference type="FunFam" id="3.40.50.300:FF:000098">
    <property type="entry name" value="Probable GTP-binding protein EngB"/>
    <property type="match status" value="1"/>
</dbReference>
<dbReference type="Gene3D" id="3.40.50.300">
    <property type="entry name" value="P-loop containing nucleotide triphosphate hydrolases"/>
    <property type="match status" value="1"/>
</dbReference>
<dbReference type="HAMAP" id="MF_00321">
    <property type="entry name" value="GTPase_EngB"/>
    <property type="match status" value="1"/>
</dbReference>
<dbReference type="InterPro" id="IPR030393">
    <property type="entry name" value="G_ENGB_dom"/>
</dbReference>
<dbReference type="InterPro" id="IPR006073">
    <property type="entry name" value="GTP-bd"/>
</dbReference>
<dbReference type="InterPro" id="IPR019987">
    <property type="entry name" value="GTP-bd_ribosome_bio_YsxC"/>
</dbReference>
<dbReference type="InterPro" id="IPR027417">
    <property type="entry name" value="P-loop_NTPase"/>
</dbReference>
<dbReference type="NCBIfam" id="TIGR03598">
    <property type="entry name" value="GTPase_YsxC"/>
    <property type="match status" value="1"/>
</dbReference>
<dbReference type="PANTHER" id="PTHR11649:SF13">
    <property type="entry name" value="ENGB-TYPE G DOMAIN-CONTAINING PROTEIN"/>
    <property type="match status" value="1"/>
</dbReference>
<dbReference type="PANTHER" id="PTHR11649">
    <property type="entry name" value="MSS1/TRME-RELATED GTP-BINDING PROTEIN"/>
    <property type="match status" value="1"/>
</dbReference>
<dbReference type="Pfam" id="PF01926">
    <property type="entry name" value="MMR_HSR1"/>
    <property type="match status" value="1"/>
</dbReference>
<dbReference type="SUPFAM" id="SSF52540">
    <property type="entry name" value="P-loop containing nucleoside triphosphate hydrolases"/>
    <property type="match status" value="1"/>
</dbReference>
<dbReference type="PROSITE" id="PS51706">
    <property type="entry name" value="G_ENGB"/>
    <property type="match status" value="1"/>
</dbReference>
<comment type="function">
    <text evidence="1">Necessary for normal cell division and for the maintenance of normal septation.</text>
</comment>
<comment type="cofactor">
    <cofactor evidence="1">
        <name>Mg(2+)</name>
        <dbReference type="ChEBI" id="CHEBI:18420"/>
    </cofactor>
</comment>
<comment type="similarity">
    <text evidence="1">Belongs to the TRAFAC class TrmE-Era-EngA-EngB-Septin-like GTPase superfamily. EngB GTPase family.</text>
</comment>
<comment type="sequence caution" evidence="2">
    <conflict type="erroneous initiation">
        <sequence resource="EMBL-CDS" id="AAG59053"/>
    </conflict>
</comment>
<feature type="chain" id="PRO_0000157749" description="Probable GTP-binding protein EngB">
    <location>
        <begin position="1"/>
        <end position="210"/>
    </location>
</feature>
<feature type="domain" description="EngB-type G" evidence="1">
    <location>
        <begin position="25"/>
        <end position="199"/>
    </location>
</feature>
<feature type="binding site" evidence="1">
    <location>
        <begin position="33"/>
        <end position="40"/>
    </location>
    <ligand>
        <name>GTP</name>
        <dbReference type="ChEBI" id="CHEBI:37565"/>
    </ligand>
</feature>
<feature type="binding site" evidence="1">
    <location>
        <position position="40"/>
    </location>
    <ligand>
        <name>Mg(2+)</name>
        <dbReference type="ChEBI" id="CHEBI:18420"/>
    </ligand>
</feature>
<feature type="binding site" evidence="1">
    <location>
        <begin position="60"/>
        <end position="64"/>
    </location>
    <ligand>
        <name>GTP</name>
        <dbReference type="ChEBI" id="CHEBI:37565"/>
    </ligand>
</feature>
<feature type="binding site" evidence="1">
    <location>
        <position position="62"/>
    </location>
    <ligand>
        <name>Mg(2+)</name>
        <dbReference type="ChEBI" id="CHEBI:18420"/>
    </ligand>
</feature>
<feature type="binding site" evidence="1">
    <location>
        <begin position="78"/>
        <end position="81"/>
    </location>
    <ligand>
        <name>GTP</name>
        <dbReference type="ChEBI" id="CHEBI:37565"/>
    </ligand>
</feature>
<feature type="binding site" evidence="1">
    <location>
        <begin position="145"/>
        <end position="148"/>
    </location>
    <ligand>
        <name>GTP</name>
        <dbReference type="ChEBI" id="CHEBI:37565"/>
    </ligand>
</feature>
<feature type="binding site" evidence="1">
    <location>
        <begin position="178"/>
        <end position="180"/>
    </location>
    <ligand>
        <name>GTP</name>
        <dbReference type="ChEBI" id="CHEBI:37565"/>
    </ligand>
</feature>
<name>ENGB_ECO57</name>
<sequence length="210" mass="23588">MTNLNYQQTHFVMSAPDIRHLPSDTGIEVAFAGRSNAGKSSALNTLTNQKSLARTSKTPGRTQLINLFEVADGKRLVDLPGYGYAEVPEEMKRKWQRALGEYLEKRQSLQGLVVLMDIRHPLKDLDQQMIEWAVDSNIAVLVLLTKADKLASGARKAQLNMVREAVLAFNGDVQVETFSSLKKQGVDKLRQKLDTWFNEMQPVEETQDGE</sequence>
<accession>Q8X8H0</accession>
<evidence type="ECO:0000255" key="1">
    <source>
        <dbReference type="HAMAP-Rule" id="MF_00321"/>
    </source>
</evidence>
<evidence type="ECO:0000305" key="2"/>
<protein>
    <recommendedName>
        <fullName evidence="1">Probable GTP-binding protein EngB</fullName>
    </recommendedName>
</protein>
<organism>
    <name type="scientific">Escherichia coli O157:H7</name>
    <dbReference type="NCBI Taxonomy" id="83334"/>
    <lineage>
        <taxon>Bacteria</taxon>
        <taxon>Pseudomonadati</taxon>
        <taxon>Pseudomonadota</taxon>
        <taxon>Gammaproteobacteria</taxon>
        <taxon>Enterobacterales</taxon>
        <taxon>Enterobacteriaceae</taxon>
        <taxon>Escherichia</taxon>
    </lineage>
</organism>
<reference key="1">
    <citation type="journal article" date="2001" name="Nature">
        <title>Genome sequence of enterohaemorrhagic Escherichia coli O157:H7.</title>
        <authorList>
            <person name="Perna N.T."/>
            <person name="Plunkett G. III"/>
            <person name="Burland V."/>
            <person name="Mau B."/>
            <person name="Glasner J.D."/>
            <person name="Rose D.J."/>
            <person name="Mayhew G.F."/>
            <person name="Evans P.S."/>
            <person name="Gregor J."/>
            <person name="Kirkpatrick H.A."/>
            <person name="Posfai G."/>
            <person name="Hackett J."/>
            <person name="Klink S."/>
            <person name="Boutin A."/>
            <person name="Shao Y."/>
            <person name="Miller L."/>
            <person name="Grotbeck E.J."/>
            <person name="Davis N.W."/>
            <person name="Lim A."/>
            <person name="Dimalanta E.T."/>
            <person name="Potamousis K."/>
            <person name="Apodaca J."/>
            <person name="Anantharaman T.S."/>
            <person name="Lin J."/>
            <person name="Yen G."/>
            <person name="Schwartz D.C."/>
            <person name="Welch R.A."/>
            <person name="Blattner F.R."/>
        </authorList>
    </citation>
    <scope>NUCLEOTIDE SEQUENCE [LARGE SCALE GENOMIC DNA]</scope>
    <source>
        <strain>O157:H7 / EDL933 / ATCC 700927 / EHEC</strain>
    </source>
</reference>
<reference key="2">
    <citation type="journal article" date="2001" name="DNA Res.">
        <title>Complete genome sequence of enterohemorrhagic Escherichia coli O157:H7 and genomic comparison with a laboratory strain K-12.</title>
        <authorList>
            <person name="Hayashi T."/>
            <person name="Makino K."/>
            <person name="Ohnishi M."/>
            <person name="Kurokawa K."/>
            <person name="Ishii K."/>
            <person name="Yokoyama K."/>
            <person name="Han C.-G."/>
            <person name="Ohtsubo E."/>
            <person name="Nakayama K."/>
            <person name="Murata T."/>
            <person name="Tanaka M."/>
            <person name="Tobe T."/>
            <person name="Iida T."/>
            <person name="Takami H."/>
            <person name="Honda T."/>
            <person name="Sasakawa C."/>
            <person name="Ogasawara N."/>
            <person name="Yasunaga T."/>
            <person name="Kuhara S."/>
            <person name="Shiba T."/>
            <person name="Hattori M."/>
            <person name="Shinagawa H."/>
        </authorList>
    </citation>
    <scope>NUCLEOTIDE SEQUENCE [LARGE SCALE GENOMIC DNA]</scope>
    <source>
        <strain>O157:H7 / Sakai / RIMD 0509952 / EHEC</strain>
    </source>
</reference>
<gene>
    <name evidence="1" type="primary">engB</name>
    <name type="ordered locus">Z5400</name>
    <name type="ordered locus">ECs4787</name>
</gene>
<keyword id="KW-0131">Cell cycle</keyword>
<keyword id="KW-0132">Cell division</keyword>
<keyword id="KW-0342">GTP-binding</keyword>
<keyword id="KW-0460">Magnesium</keyword>
<keyword id="KW-0479">Metal-binding</keyword>
<keyword id="KW-0547">Nucleotide-binding</keyword>
<keyword id="KW-1185">Reference proteome</keyword>
<keyword id="KW-0717">Septation</keyword>